<protein>
    <recommendedName>
        <fullName>Bradykinin-potentiating peptide Phypo Xa</fullName>
        <shortName>BPP</shortName>
    </recommendedName>
</protein>
<proteinExistence type="evidence at protein level"/>
<sequence>QFRPSYQIPP</sequence>
<accession>P85165</accession>
<name>BPPXA_PITHY</name>
<dbReference type="GO" id="GO:0005576">
    <property type="term" value="C:extracellular region"/>
    <property type="evidence" value="ECO:0007669"/>
    <property type="project" value="UniProtKB-SubCell"/>
</dbReference>
<dbReference type="GO" id="GO:0090729">
    <property type="term" value="F:toxin activity"/>
    <property type="evidence" value="ECO:0007669"/>
    <property type="project" value="UniProtKB-KW"/>
</dbReference>
<dbReference type="GO" id="GO:0008217">
    <property type="term" value="P:regulation of blood pressure"/>
    <property type="evidence" value="ECO:0007669"/>
    <property type="project" value="UniProtKB-KW"/>
</dbReference>
<keyword id="KW-0903">Direct protein sequencing</keyword>
<keyword id="KW-0382">Hypotensive agent</keyword>
<keyword id="KW-0873">Pyrrolidone carboxylic acid</keyword>
<keyword id="KW-0964">Secreted</keyword>
<keyword id="KW-0800">Toxin</keyword>
<comment type="function">
    <text evidence="1">This peptide both inhibits the activity of the angiotensin-converting enzyme and enhances the action of bradykinin by inhibiting the peptidases that inactivate it. It acts as an indirect hypotensive agent.</text>
</comment>
<comment type="subcellular location">
    <subcellularLocation>
        <location evidence="1">Secreted</location>
    </subcellularLocation>
</comment>
<comment type="tissue specificity">
    <text evidence="1">Expressed by the skin glands.</text>
</comment>
<comment type="mass spectrometry"/>
<comment type="similarity">
    <text evidence="2">Belongs to the bradykinin-potentiating peptide family.</text>
</comment>
<feature type="peptide" id="PRO_0000291534" description="Bradykinin-potentiating peptide Phypo Xa" evidence="1">
    <location>
        <begin position="1"/>
        <end position="10"/>
    </location>
</feature>
<feature type="modified residue" description="Pyrrolidone carboxylic acid" evidence="1">
    <location>
        <position position="1"/>
    </location>
</feature>
<reference evidence="2" key="1">
    <citation type="journal article" date="2007" name="Peptides">
        <title>Isolation and characterization of a novel bradykinin potentiating peptide (BPP) from the skin secretion of Phyllomedusa hypochondrialis.</title>
        <authorList>
            <person name="Conceicao K."/>
            <person name="Konno K."/>
            <person name="de Melo R.L."/>
            <person name="Antoniazzi M.M."/>
            <person name="Jared C."/>
            <person name="Sciani J.M."/>
            <person name="Conceicao I.M."/>
            <person name="Prezoto B.C."/>
            <person name="de Camargo A.C.M."/>
            <person name="Pimenta D.C."/>
        </authorList>
    </citation>
    <scope>PROTEIN SEQUENCE</scope>
    <scope>FUNCTION</scope>
    <scope>SUBCELLULAR LOCATION</scope>
    <scope>TISSUE SPECIFICITY</scope>
    <scope>MASS SPECTROMETRY</scope>
    <scope>PYROGLUTAMATE FORMATION AT GLN-1</scope>
    <source>
        <tissue evidence="1">Skin secretion</tissue>
    </source>
</reference>
<evidence type="ECO:0000269" key="1">
    <source>
    </source>
</evidence>
<evidence type="ECO:0000305" key="2"/>
<organism>
    <name type="scientific">Pithecopus hypochondrialis</name>
    <name type="common">Orange-legged leaf frog</name>
    <name type="synonym">Phyllomedusa hypochondrialis</name>
    <dbReference type="NCBI Taxonomy" id="317381"/>
    <lineage>
        <taxon>Eukaryota</taxon>
        <taxon>Metazoa</taxon>
        <taxon>Chordata</taxon>
        <taxon>Craniata</taxon>
        <taxon>Vertebrata</taxon>
        <taxon>Euteleostomi</taxon>
        <taxon>Amphibia</taxon>
        <taxon>Batrachia</taxon>
        <taxon>Anura</taxon>
        <taxon>Neobatrachia</taxon>
        <taxon>Hyloidea</taxon>
        <taxon>Hylidae</taxon>
        <taxon>Phyllomedusinae</taxon>
        <taxon>Pithecopus</taxon>
    </lineage>
</organism>